<proteinExistence type="inferred from homology"/>
<sequence>MAVAKKRKVKKNIPEGIVYIYSTFNNTIVTISDKQGNVVSWCSAGVLGFKGSRKSTPFAAQNALADAAKKAADCGMRKVEVKVKGPGPGREAALRALVSTGFEVSRIYDVTPVPHNGCKPPKRRRV</sequence>
<dbReference type="EMBL" id="CR522870">
    <property type="protein sequence ID" value="CAG35879.1"/>
    <property type="molecule type" value="Genomic_DNA"/>
</dbReference>
<dbReference type="RefSeq" id="WP_011188391.1">
    <property type="nucleotide sequence ID" value="NC_006138.1"/>
</dbReference>
<dbReference type="SMR" id="Q6AP45"/>
<dbReference type="STRING" id="177439.DP1150"/>
<dbReference type="KEGG" id="dps:DP1150"/>
<dbReference type="eggNOG" id="COG0100">
    <property type="taxonomic scope" value="Bacteria"/>
</dbReference>
<dbReference type="HOGENOM" id="CLU_072439_5_0_7"/>
<dbReference type="OrthoDB" id="9806415at2"/>
<dbReference type="Proteomes" id="UP000000602">
    <property type="component" value="Chromosome"/>
</dbReference>
<dbReference type="GO" id="GO:1990904">
    <property type="term" value="C:ribonucleoprotein complex"/>
    <property type="evidence" value="ECO:0007669"/>
    <property type="project" value="UniProtKB-KW"/>
</dbReference>
<dbReference type="GO" id="GO:0005840">
    <property type="term" value="C:ribosome"/>
    <property type="evidence" value="ECO:0007669"/>
    <property type="project" value="UniProtKB-KW"/>
</dbReference>
<dbReference type="GO" id="GO:0019843">
    <property type="term" value="F:rRNA binding"/>
    <property type="evidence" value="ECO:0007669"/>
    <property type="project" value="UniProtKB-UniRule"/>
</dbReference>
<dbReference type="GO" id="GO:0003735">
    <property type="term" value="F:structural constituent of ribosome"/>
    <property type="evidence" value="ECO:0007669"/>
    <property type="project" value="InterPro"/>
</dbReference>
<dbReference type="GO" id="GO:0006412">
    <property type="term" value="P:translation"/>
    <property type="evidence" value="ECO:0007669"/>
    <property type="project" value="UniProtKB-UniRule"/>
</dbReference>
<dbReference type="FunFam" id="3.30.420.80:FF:000001">
    <property type="entry name" value="30S ribosomal protein S11"/>
    <property type="match status" value="1"/>
</dbReference>
<dbReference type="Gene3D" id="3.30.420.80">
    <property type="entry name" value="Ribosomal protein S11"/>
    <property type="match status" value="1"/>
</dbReference>
<dbReference type="HAMAP" id="MF_01310">
    <property type="entry name" value="Ribosomal_uS11"/>
    <property type="match status" value="1"/>
</dbReference>
<dbReference type="InterPro" id="IPR001971">
    <property type="entry name" value="Ribosomal_uS11"/>
</dbReference>
<dbReference type="InterPro" id="IPR019981">
    <property type="entry name" value="Ribosomal_uS11_bac-type"/>
</dbReference>
<dbReference type="InterPro" id="IPR018102">
    <property type="entry name" value="Ribosomal_uS11_CS"/>
</dbReference>
<dbReference type="InterPro" id="IPR036967">
    <property type="entry name" value="Ribosomal_uS11_sf"/>
</dbReference>
<dbReference type="NCBIfam" id="NF003698">
    <property type="entry name" value="PRK05309.1"/>
    <property type="match status" value="1"/>
</dbReference>
<dbReference type="NCBIfam" id="TIGR03632">
    <property type="entry name" value="uS11_bact"/>
    <property type="match status" value="1"/>
</dbReference>
<dbReference type="PANTHER" id="PTHR11759">
    <property type="entry name" value="40S RIBOSOMAL PROTEIN S14/30S RIBOSOMAL PROTEIN S11"/>
    <property type="match status" value="1"/>
</dbReference>
<dbReference type="Pfam" id="PF00411">
    <property type="entry name" value="Ribosomal_S11"/>
    <property type="match status" value="1"/>
</dbReference>
<dbReference type="PIRSF" id="PIRSF002131">
    <property type="entry name" value="Ribosomal_S11"/>
    <property type="match status" value="1"/>
</dbReference>
<dbReference type="SUPFAM" id="SSF53137">
    <property type="entry name" value="Translational machinery components"/>
    <property type="match status" value="1"/>
</dbReference>
<dbReference type="PROSITE" id="PS00054">
    <property type="entry name" value="RIBOSOMAL_S11"/>
    <property type="match status" value="1"/>
</dbReference>
<comment type="function">
    <text evidence="1">Located on the platform of the 30S subunit, it bridges several disparate RNA helices of the 16S rRNA. Forms part of the Shine-Dalgarno cleft in the 70S ribosome.</text>
</comment>
<comment type="subunit">
    <text evidence="1">Part of the 30S ribosomal subunit. Interacts with proteins S7 and S18. Binds to IF-3.</text>
</comment>
<comment type="similarity">
    <text evidence="1">Belongs to the universal ribosomal protein uS11 family.</text>
</comment>
<gene>
    <name evidence="1" type="primary">rpsK</name>
    <name type="ordered locus">DP1150</name>
</gene>
<accession>Q6AP45</accession>
<evidence type="ECO:0000255" key="1">
    <source>
        <dbReference type="HAMAP-Rule" id="MF_01310"/>
    </source>
</evidence>
<evidence type="ECO:0000305" key="2"/>
<feature type="chain" id="PRO_0000123142" description="Small ribosomal subunit protein uS11">
    <location>
        <begin position="1"/>
        <end position="126"/>
    </location>
</feature>
<keyword id="KW-1185">Reference proteome</keyword>
<keyword id="KW-0687">Ribonucleoprotein</keyword>
<keyword id="KW-0689">Ribosomal protein</keyword>
<keyword id="KW-0694">RNA-binding</keyword>
<keyword id="KW-0699">rRNA-binding</keyword>
<organism>
    <name type="scientific">Desulfotalea psychrophila (strain LSv54 / DSM 12343)</name>
    <dbReference type="NCBI Taxonomy" id="177439"/>
    <lineage>
        <taxon>Bacteria</taxon>
        <taxon>Pseudomonadati</taxon>
        <taxon>Thermodesulfobacteriota</taxon>
        <taxon>Desulfobulbia</taxon>
        <taxon>Desulfobulbales</taxon>
        <taxon>Desulfocapsaceae</taxon>
        <taxon>Desulfotalea</taxon>
    </lineage>
</organism>
<protein>
    <recommendedName>
        <fullName evidence="1">Small ribosomal subunit protein uS11</fullName>
    </recommendedName>
    <alternativeName>
        <fullName evidence="2">30S ribosomal protein S11</fullName>
    </alternativeName>
</protein>
<name>RS11_DESPS</name>
<reference key="1">
    <citation type="journal article" date="2004" name="Environ. Microbiol.">
        <title>The genome of Desulfotalea psychrophila, a sulfate-reducing bacterium from permanently cold Arctic sediments.</title>
        <authorList>
            <person name="Rabus R."/>
            <person name="Ruepp A."/>
            <person name="Frickey T."/>
            <person name="Rattei T."/>
            <person name="Fartmann B."/>
            <person name="Stark M."/>
            <person name="Bauer M."/>
            <person name="Zibat A."/>
            <person name="Lombardot T."/>
            <person name="Becker I."/>
            <person name="Amann J."/>
            <person name="Gellner K."/>
            <person name="Teeling H."/>
            <person name="Leuschner W.D."/>
            <person name="Gloeckner F.-O."/>
            <person name="Lupas A.N."/>
            <person name="Amann R."/>
            <person name="Klenk H.-P."/>
        </authorList>
    </citation>
    <scope>NUCLEOTIDE SEQUENCE [LARGE SCALE GENOMIC DNA]</scope>
    <source>
        <strain>DSM 12343 / LSv54</strain>
    </source>
</reference>